<accession>Q83HH2</accession>
<evidence type="ECO:0000255" key="1">
    <source>
        <dbReference type="HAMAP-Rule" id="MF_00382"/>
    </source>
</evidence>
<evidence type="ECO:0000305" key="2"/>
<organism>
    <name type="scientific">Tropheryma whipplei (strain TW08/27)</name>
    <name type="common">Whipple's bacillus</name>
    <dbReference type="NCBI Taxonomy" id="218496"/>
    <lineage>
        <taxon>Bacteria</taxon>
        <taxon>Bacillati</taxon>
        <taxon>Actinomycetota</taxon>
        <taxon>Actinomycetes</taxon>
        <taxon>Micrococcales</taxon>
        <taxon>Tropherymataceae</taxon>
        <taxon>Tropheryma</taxon>
    </lineage>
</organism>
<protein>
    <recommendedName>
        <fullName evidence="1">Large ribosomal subunit protein bL20</fullName>
    </recommendedName>
    <alternativeName>
        <fullName evidence="2">50S ribosomal protein L20</fullName>
    </alternativeName>
</protein>
<name>RL20_TROW8</name>
<dbReference type="EMBL" id="BX251412">
    <property type="protein sequence ID" value="CAD67271.1"/>
    <property type="molecule type" value="Genomic_DNA"/>
</dbReference>
<dbReference type="RefSeq" id="WP_011096551.1">
    <property type="nucleotide sequence ID" value="NC_004551.1"/>
</dbReference>
<dbReference type="SMR" id="Q83HH2"/>
<dbReference type="GeneID" id="67388388"/>
<dbReference type="KEGG" id="tws:TW606"/>
<dbReference type="HOGENOM" id="CLU_123265_0_0_11"/>
<dbReference type="GO" id="GO:1990904">
    <property type="term" value="C:ribonucleoprotein complex"/>
    <property type="evidence" value="ECO:0007669"/>
    <property type="project" value="UniProtKB-KW"/>
</dbReference>
<dbReference type="GO" id="GO:0005840">
    <property type="term" value="C:ribosome"/>
    <property type="evidence" value="ECO:0007669"/>
    <property type="project" value="UniProtKB-KW"/>
</dbReference>
<dbReference type="GO" id="GO:0019843">
    <property type="term" value="F:rRNA binding"/>
    <property type="evidence" value="ECO:0007669"/>
    <property type="project" value="UniProtKB-UniRule"/>
</dbReference>
<dbReference type="GO" id="GO:0003735">
    <property type="term" value="F:structural constituent of ribosome"/>
    <property type="evidence" value="ECO:0007669"/>
    <property type="project" value="InterPro"/>
</dbReference>
<dbReference type="GO" id="GO:0000027">
    <property type="term" value="P:ribosomal large subunit assembly"/>
    <property type="evidence" value="ECO:0007669"/>
    <property type="project" value="UniProtKB-UniRule"/>
</dbReference>
<dbReference type="GO" id="GO:0006412">
    <property type="term" value="P:translation"/>
    <property type="evidence" value="ECO:0007669"/>
    <property type="project" value="InterPro"/>
</dbReference>
<dbReference type="CDD" id="cd07026">
    <property type="entry name" value="Ribosomal_L20"/>
    <property type="match status" value="1"/>
</dbReference>
<dbReference type="FunFam" id="1.10.1900.20:FF:000001">
    <property type="entry name" value="50S ribosomal protein L20"/>
    <property type="match status" value="1"/>
</dbReference>
<dbReference type="Gene3D" id="6.10.160.10">
    <property type="match status" value="1"/>
</dbReference>
<dbReference type="Gene3D" id="1.10.1900.20">
    <property type="entry name" value="Ribosomal protein L20"/>
    <property type="match status" value="1"/>
</dbReference>
<dbReference type="HAMAP" id="MF_00382">
    <property type="entry name" value="Ribosomal_bL20"/>
    <property type="match status" value="1"/>
</dbReference>
<dbReference type="InterPro" id="IPR005813">
    <property type="entry name" value="Ribosomal_bL20"/>
</dbReference>
<dbReference type="InterPro" id="IPR049946">
    <property type="entry name" value="RIBOSOMAL_L20_CS"/>
</dbReference>
<dbReference type="InterPro" id="IPR035566">
    <property type="entry name" value="Ribosomal_protein_bL20_C"/>
</dbReference>
<dbReference type="NCBIfam" id="TIGR01032">
    <property type="entry name" value="rplT_bact"/>
    <property type="match status" value="1"/>
</dbReference>
<dbReference type="PANTHER" id="PTHR10986">
    <property type="entry name" value="39S RIBOSOMAL PROTEIN L20"/>
    <property type="match status" value="1"/>
</dbReference>
<dbReference type="Pfam" id="PF00453">
    <property type="entry name" value="Ribosomal_L20"/>
    <property type="match status" value="1"/>
</dbReference>
<dbReference type="PRINTS" id="PR00062">
    <property type="entry name" value="RIBOSOMALL20"/>
</dbReference>
<dbReference type="SUPFAM" id="SSF74731">
    <property type="entry name" value="Ribosomal protein L20"/>
    <property type="match status" value="1"/>
</dbReference>
<dbReference type="PROSITE" id="PS00937">
    <property type="entry name" value="RIBOSOMAL_L20"/>
    <property type="match status" value="1"/>
</dbReference>
<keyword id="KW-0687">Ribonucleoprotein</keyword>
<keyword id="KW-0689">Ribosomal protein</keyword>
<keyword id="KW-0694">RNA-binding</keyword>
<keyword id="KW-0699">rRNA-binding</keyword>
<reference key="1">
    <citation type="journal article" date="2003" name="Lancet">
        <title>Sequencing and analysis of the genome of the Whipple's disease bacterium Tropheryma whipplei.</title>
        <authorList>
            <person name="Bentley S.D."/>
            <person name="Maiwald M."/>
            <person name="Murphy L.D."/>
            <person name="Pallen M.J."/>
            <person name="Yeats C.A."/>
            <person name="Dover L.G."/>
            <person name="Norbertczak H.T."/>
            <person name="Besra G.S."/>
            <person name="Quail M.A."/>
            <person name="Harris D.E."/>
            <person name="von Herbay A."/>
            <person name="Goble A."/>
            <person name="Rutter S."/>
            <person name="Squares R."/>
            <person name="Squares S."/>
            <person name="Barrell B.G."/>
            <person name="Parkhill J."/>
            <person name="Relman D.A."/>
        </authorList>
    </citation>
    <scope>NUCLEOTIDE SEQUENCE [LARGE SCALE GENOMIC DNA]</scope>
    <source>
        <strain>TW08/27</strain>
    </source>
</reference>
<gene>
    <name evidence="1" type="primary">rplT</name>
    <name type="ordered locus">TW606</name>
</gene>
<sequence length="136" mass="15546">MVRVARSVNARKKRRSILAAAKGYRGQRSRLYRKAKEQVLRSLVYAYRDRRKRKSSFRKLWIIRINAAARMEGVTYNRFLQGLKLANIELDRRSLAHLAVHNPDTFSALVGVAKDSLKNAPDPVAAPRLRGTSSRT</sequence>
<proteinExistence type="inferred from homology"/>
<comment type="function">
    <text evidence="1">Binds directly to 23S ribosomal RNA and is necessary for the in vitro assembly process of the 50S ribosomal subunit. It is not involved in the protein synthesizing functions of that subunit.</text>
</comment>
<comment type="similarity">
    <text evidence="1">Belongs to the bacterial ribosomal protein bL20 family.</text>
</comment>
<feature type="chain" id="PRO_0000177254" description="Large ribosomal subunit protein bL20">
    <location>
        <begin position="1"/>
        <end position="136"/>
    </location>
</feature>